<comment type="function">
    <text evidence="1">Regulates immune responses through the recognition of cell-surface glycans. Essential for the anergy and suppressive function of CD25-positive regulatory T-cells (Treg) (By similarity).</text>
</comment>
<comment type="subunit">
    <text evidence="1">Interacts with CEL.</text>
</comment>
<comment type="subcellular location">
    <subcellularLocation>
        <location evidence="1">Cytoplasm</location>
        <location evidence="1">Cytosol</location>
    </subcellularLocation>
    <subcellularLocation>
        <location evidence="1">Cytoplasmic granule</location>
    </subcellularLocation>
    <text evidence="1">Localized in granules from where it may be secreted or transported to other locations in the cell.</text>
</comment>
<proteinExistence type="inferred from homology"/>
<organism>
    <name type="scientific">Pongo pygmaeus</name>
    <name type="common">Bornean orangutan</name>
    <dbReference type="NCBI Taxonomy" id="9600"/>
    <lineage>
        <taxon>Eukaryota</taxon>
        <taxon>Metazoa</taxon>
        <taxon>Chordata</taxon>
        <taxon>Craniata</taxon>
        <taxon>Vertebrata</taxon>
        <taxon>Euteleostomi</taxon>
        <taxon>Mammalia</taxon>
        <taxon>Eutheria</taxon>
        <taxon>Euarchontoglires</taxon>
        <taxon>Primates</taxon>
        <taxon>Haplorrhini</taxon>
        <taxon>Catarrhini</taxon>
        <taxon>Hominidae</taxon>
        <taxon>Pongo</taxon>
    </lineage>
</organism>
<accession>P79238</accession>
<evidence type="ECO:0000250" key="1"/>
<evidence type="ECO:0000255" key="2">
    <source>
        <dbReference type="PROSITE-ProRule" id="PRU00639"/>
    </source>
</evidence>
<dbReference type="EMBL" id="U67984">
    <property type="protein sequence ID" value="AAB41695.1"/>
    <property type="molecule type" value="Genomic_DNA"/>
</dbReference>
<dbReference type="SMR" id="P79238"/>
<dbReference type="GO" id="GO:0005829">
    <property type="term" value="C:cytosol"/>
    <property type="evidence" value="ECO:0000250"/>
    <property type="project" value="UniProtKB"/>
</dbReference>
<dbReference type="GO" id="GO:0030246">
    <property type="term" value="F:carbohydrate binding"/>
    <property type="evidence" value="ECO:0007669"/>
    <property type="project" value="UniProtKB-KW"/>
</dbReference>
<dbReference type="GO" id="GO:0046006">
    <property type="term" value="P:regulation of activated T cell proliferation"/>
    <property type="evidence" value="ECO:0000250"/>
    <property type="project" value="UniProtKB"/>
</dbReference>
<dbReference type="GO" id="GO:0002667">
    <property type="term" value="P:regulation of T cell anergy"/>
    <property type="evidence" value="ECO:0000250"/>
    <property type="project" value="UniProtKB"/>
</dbReference>
<dbReference type="GO" id="GO:0002724">
    <property type="term" value="P:regulation of T cell cytokine production"/>
    <property type="evidence" value="ECO:0000250"/>
    <property type="project" value="UniProtKB"/>
</dbReference>
<dbReference type="GO" id="GO:0070231">
    <property type="term" value="P:T cell apoptotic process"/>
    <property type="evidence" value="ECO:0000250"/>
    <property type="project" value="UniProtKB"/>
</dbReference>
<dbReference type="FunFam" id="2.60.120.200:FF:000564">
    <property type="entry name" value="Galectin-10"/>
    <property type="match status" value="1"/>
</dbReference>
<dbReference type="Gene3D" id="2.60.120.200">
    <property type="match status" value="1"/>
</dbReference>
<dbReference type="InterPro" id="IPR013320">
    <property type="entry name" value="ConA-like_dom_sf"/>
</dbReference>
<dbReference type="InterPro" id="IPR044156">
    <property type="entry name" value="Galectin-like"/>
</dbReference>
<dbReference type="InterPro" id="IPR001079">
    <property type="entry name" value="Galectin_CRD"/>
</dbReference>
<dbReference type="PANTHER" id="PTHR11346:SF120">
    <property type="entry name" value="GALACTOSIDE-BINDING SOLUBLE LECTIN 13-RELATED"/>
    <property type="match status" value="1"/>
</dbReference>
<dbReference type="PANTHER" id="PTHR11346">
    <property type="entry name" value="GALECTIN"/>
    <property type="match status" value="1"/>
</dbReference>
<dbReference type="Pfam" id="PF00337">
    <property type="entry name" value="Gal-bind_lectin"/>
    <property type="match status" value="1"/>
</dbReference>
<dbReference type="SUPFAM" id="SSF49899">
    <property type="entry name" value="Concanavalin A-like lectins/glucanases"/>
    <property type="match status" value="1"/>
</dbReference>
<dbReference type="PROSITE" id="PS51304">
    <property type="entry name" value="GALECTIN"/>
    <property type="match status" value="1"/>
</dbReference>
<reference key="1">
    <citation type="journal article" date="1997" name="Genomics">
        <title>The genomic structure of the human Charcot-Leyden crystal protein gene is analogous to those of the galectin genes.</title>
        <authorList>
            <person name="Dyer K.D."/>
            <person name="Handen J.S."/>
            <person name="Rosenberg H.F."/>
        </authorList>
    </citation>
    <scope>NUCLEOTIDE SEQUENCE [GENOMIC DNA]</scope>
</reference>
<sequence length="68" mass="8006">EPYLQVDFHTEMKEESGIAFHFQVHFGCYVVMNSREYGAWKKPVESKNMPFQDGQEFDLSISVLPDKY</sequence>
<name>LEG10_PONPY</name>
<protein>
    <recommendedName>
        <fullName>Galectin-10</fullName>
        <shortName>Gal-10</shortName>
    </recommendedName>
    <alternativeName>
        <fullName>Charcot-Leyden crystal protein homolog</fullName>
        <shortName>CLC</shortName>
    </alternativeName>
</protein>
<gene>
    <name type="primary">CLC</name>
</gene>
<keyword id="KW-0963">Cytoplasm</keyword>
<keyword id="KW-0430">Lectin</keyword>
<feature type="chain" id="PRO_0000076962" description="Galectin-10">
    <location>
        <begin position="1" status="less than"/>
        <end position="68" status="greater than"/>
    </location>
</feature>
<feature type="domain" description="Galectin" evidence="2">
    <location>
        <begin position="1" status="less than"/>
        <end position="68" status="greater than"/>
    </location>
</feature>
<feature type="non-terminal residue">
    <location>
        <position position="1"/>
    </location>
</feature>
<feature type="non-terminal residue">
    <location>
        <position position="68"/>
    </location>
</feature>